<accession>Q6M0P3</accession>
<name>QUEC_METMP</name>
<organism>
    <name type="scientific">Methanococcus maripaludis (strain DSM 14266 / JCM 13030 / NBRC 101832 / S2 / LL)</name>
    <dbReference type="NCBI Taxonomy" id="267377"/>
    <lineage>
        <taxon>Archaea</taxon>
        <taxon>Methanobacteriati</taxon>
        <taxon>Methanobacteriota</taxon>
        <taxon>Methanomada group</taxon>
        <taxon>Methanococci</taxon>
        <taxon>Methanococcales</taxon>
        <taxon>Methanococcaceae</taxon>
        <taxon>Methanococcus</taxon>
    </lineage>
</organism>
<keyword id="KW-0067">ATP-binding</keyword>
<keyword id="KW-0436">Ligase</keyword>
<keyword id="KW-0479">Metal-binding</keyword>
<keyword id="KW-0547">Nucleotide-binding</keyword>
<keyword id="KW-1185">Reference proteome</keyword>
<keyword id="KW-0862">Zinc</keyword>
<dbReference type="EC" id="6.3.4.20" evidence="1"/>
<dbReference type="EMBL" id="BX950229">
    <property type="protein sequence ID" value="CAF29782.1"/>
    <property type="molecule type" value="Genomic_DNA"/>
</dbReference>
<dbReference type="RefSeq" id="WP_011170170.1">
    <property type="nucleotide sequence ID" value="NC_005791.1"/>
</dbReference>
<dbReference type="SMR" id="Q6M0P3"/>
<dbReference type="STRING" id="267377.MMP0226"/>
<dbReference type="EnsemblBacteria" id="CAF29782">
    <property type="protein sequence ID" value="CAF29782"/>
    <property type="gene ID" value="MMP0226"/>
</dbReference>
<dbReference type="GeneID" id="2762616"/>
<dbReference type="KEGG" id="mmp:MMP0226"/>
<dbReference type="PATRIC" id="fig|267377.15.peg.228"/>
<dbReference type="eggNOG" id="arCOG00039">
    <property type="taxonomic scope" value="Archaea"/>
</dbReference>
<dbReference type="HOGENOM" id="CLU_081854_1_1_2"/>
<dbReference type="OrthoDB" id="6532at2157"/>
<dbReference type="UniPathway" id="UPA00391"/>
<dbReference type="Proteomes" id="UP000000590">
    <property type="component" value="Chromosome"/>
</dbReference>
<dbReference type="GO" id="GO:0005524">
    <property type="term" value="F:ATP binding"/>
    <property type="evidence" value="ECO:0007669"/>
    <property type="project" value="UniProtKB-UniRule"/>
</dbReference>
<dbReference type="GO" id="GO:0016879">
    <property type="term" value="F:ligase activity, forming carbon-nitrogen bonds"/>
    <property type="evidence" value="ECO:0007669"/>
    <property type="project" value="UniProtKB-UniRule"/>
</dbReference>
<dbReference type="GO" id="GO:0008270">
    <property type="term" value="F:zinc ion binding"/>
    <property type="evidence" value="ECO:0007669"/>
    <property type="project" value="UniProtKB-UniRule"/>
</dbReference>
<dbReference type="CDD" id="cd01995">
    <property type="entry name" value="QueC-like"/>
    <property type="match status" value="1"/>
</dbReference>
<dbReference type="Gene3D" id="3.40.50.620">
    <property type="entry name" value="HUPs"/>
    <property type="match status" value="1"/>
</dbReference>
<dbReference type="HAMAP" id="MF_01633">
    <property type="entry name" value="QueC"/>
    <property type="match status" value="1"/>
</dbReference>
<dbReference type="InterPro" id="IPR018317">
    <property type="entry name" value="QueC"/>
</dbReference>
<dbReference type="InterPro" id="IPR014729">
    <property type="entry name" value="Rossmann-like_a/b/a_fold"/>
</dbReference>
<dbReference type="NCBIfam" id="TIGR00364">
    <property type="entry name" value="7-cyano-7-deazaguanine synthase QueC"/>
    <property type="match status" value="1"/>
</dbReference>
<dbReference type="PANTHER" id="PTHR42914">
    <property type="entry name" value="7-CYANO-7-DEAZAGUANINE SYNTHASE"/>
    <property type="match status" value="1"/>
</dbReference>
<dbReference type="PANTHER" id="PTHR42914:SF1">
    <property type="entry name" value="7-CYANO-7-DEAZAGUANINE SYNTHASE"/>
    <property type="match status" value="1"/>
</dbReference>
<dbReference type="Pfam" id="PF06508">
    <property type="entry name" value="QueC"/>
    <property type="match status" value="1"/>
</dbReference>
<dbReference type="PIRSF" id="PIRSF006293">
    <property type="entry name" value="ExsB"/>
    <property type="match status" value="1"/>
</dbReference>
<dbReference type="SUPFAM" id="SSF52402">
    <property type="entry name" value="Adenine nucleotide alpha hydrolases-like"/>
    <property type="match status" value="1"/>
</dbReference>
<sequence length="233" mass="26162">MKAICVLSGGLDSAVTSMFAKSKNYDISTVTFNYGQMALNQEIKSAKKISDILNADHHVIDINFVKEFSKSGLNTGNIPEPENEDLDDFEKSEKTMKAVWVPARNMIMFSIASGFAEGIGAEKIFSGLNKEEGVTFPDNTPEFIERFNKSLEYGTLNKVKMVAPLYELNKPEIAKLGKELELKLDLEVLKYSYSCYKDNGKDYLHCGTCESCMRRKRAFKEAGITDPTKYLVE</sequence>
<comment type="function">
    <text evidence="1">Catalyzes the ATP-dependent conversion of 7-carboxy-7-deazaguanine (CDG) to 7-cyano-7-deazaguanine (preQ(0)).</text>
</comment>
<comment type="catalytic activity">
    <reaction evidence="1">
        <text>7-carboxy-7-deazaguanine + NH4(+) + ATP = 7-cyano-7-deazaguanine + ADP + phosphate + H2O + H(+)</text>
        <dbReference type="Rhea" id="RHEA:27982"/>
        <dbReference type="ChEBI" id="CHEBI:15377"/>
        <dbReference type="ChEBI" id="CHEBI:15378"/>
        <dbReference type="ChEBI" id="CHEBI:28938"/>
        <dbReference type="ChEBI" id="CHEBI:30616"/>
        <dbReference type="ChEBI" id="CHEBI:43474"/>
        <dbReference type="ChEBI" id="CHEBI:45075"/>
        <dbReference type="ChEBI" id="CHEBI:61036"/>
        <dbReference type="ChEBI" id="CHEBI:456216"/>
        <dbReference type="EC" id="6.3.4.20"/>
    </reaction>
</comment>
<comment type="cofactor">
    <cofactor evidence="1">
        <name>Zn(2+)</name>
        <dbReference type="ChEBI" id="CHEBI:29105"/>
    </cofactor>
    <text evidence="1">Binds 1 zinc ion per subunit.</text>
</comment>
<comment type="pathway">
    <text evidence="1">Purine metabolism; 7-cyano-7-deazaguanine biosynthesis.</text>
</comment>
<comment type="similarity">
    <text evidence="1">Belongs to the QueC family.</text>
</comment>
<reference key="1">
    <citation type="journal article" date="2004" name="J. Bacteriol.">
        <title>Complete genome sequence of the genetically tractable hydrogenotrophic methanogen Methanococcus maripaludis.</title>
        <authorList>
            <person name="Hendrickson E.L."/>
            <person name="Kaul R."/>
            <person name="Zhou Y."/>
            <person name="Bovee D."/>
            <person name="Chapman P."/>
            <person name="Chung J."/>
            <person name="Conway de Macario E."/>
            <person name="Dodsworth J.A."/>
            <person name="Gillett W."/>
            <person name="Graham D.E."/>
            <person name="Hackett M."/>
            <person name="Haydock A.K."/>
            <person name="Kang A."/>
            <person name="Land M.L."/>
            <person name="Levy R."/>
            <person name="Lie T.J."/>
            <person name="Major T.A."/>
            <person name="Moore B.C."/>
            <person name="Porat I."/>
            <person name="Palmeiri A."/>
            <person name="Rouse G."/>
            <person name="Saenphimmachak C."/>
            <person name="Soell D."/>
            <person name="Van Dien S."/>
            <person name="Wang T."/>
            <person name="Whitman W.B."/>
            <person name="Xia Q."/>
            <person name="Zhang Y."/>
            <person name="Larimer F.W."/>
            <person name="Olson M.V."/>
            <person name="Leigh J.A."/>
        </authorList>
    </citation>
    <scope>NUCLEOTIDE SEQUENCE [LARGE SCALE GENOMIC DNA]</scope>
    <source>
        <strain>DSM 14266 / JCM 13030 / NBRC 101832 / S2 / LL</strain>
    </source>
</reference>
<proteinExistence type="inferred from homology"/>
<feature type="chain" id="PRO_0000246976" description="7-cyano-7-deazaguanine synthase">
    <location>
        <begin position="1"/>
        <end position="233"/>
    </location>
</feature>
<feature type="binding site" evidence="1">
    <location>
        <begin position="7"/>
        <end position="17"/>
    </location>
    <ligand>
        <name>ATP</name>
        <dbReference type="ChEBI" id="CHEBI:30616"/>
    </ligand>
</feature>
<feature type="binding site" evidence="1">
    <location>
        <position position="195"/>
    </location>
    <ligand>
        <name>Zn(2+)</name>
        <dbReference type="ChEBI" id="CHEBI:29105"/>
    </ligand>
</feature>
<feature type="binding site" evidence="1">
    <location>
        <position position="206"/>
    </location>
    <ligand>
        <name>Zn(2+)</name>
        <dbReference type="ChEBI" id="CHEBI:29105"/>
    </ligand>
</feature>
<feature type="binding site" evidence="1">
    <location>
        <position position="209"/>
    </location>
    <ligand>
        <name>Zn(2+)</name>
        <dbReference type="ChEBI" id="CHEBI:29105"/>
    </ligand>
</feature>
<feature type="binding site" evidence="1">
    <location>
        <position position="212"/>
    </location>
    <ligand>
        <name>Zn(2+)</name>
        <dbReference type="ChEBI" id="CHEBI:29105"/>
    </ligand>
</feature>
<evidence type="ECO:0000255" key="1">
    <source>
        <dbReference type="HAMAP-Rule" id="MF_01633"/>
    </source>
</evidence>
<protein>
    <recommendedName>
        <fullName evidence="1">7-cyano-7-deazaguanine synthase</fullName>
        <ecNumber evidence="1">6.3.4.20</ecNumber>
    </recommendedName>
    <alternativeName>
        <fullName evidence="1">7-cyano-7-carbaguanine synthase</fullName>
    </alternativeName>
    <alternativeName>
        <fullName evidence="1">Archaeosine biosynthesis protein QueC</fullName>
    </alternativeName>
    <alternativeName>
        <fullName evidence="1">PreQ(0) synthase</fullName>
    </alternativeName>
</protein>
<gene>
    <name evidence="1" type="primary">queC</name>
    <name type="ordered locus">MMP0226</name>
</gene>